<name>UEX_DROME</name>
<accession>A0A0B7P9G0</accession>
<gene>
    <name evidence="10" type="primary">uex</name>
    <name evidence="10" type="synonym">41Ad</name>
    <name evidence="10" type="synonym">GroupIII</name>
    <name evidence="10" type="synonym">l(2)41Ad</name>
    <name evidence="10" type="ORF">CG42595</name>
</gene>
<evidence type="ECO:0000250" key="1">
    <source>
        <dbReference type="UniProtKB" id="Q3TWN3"/>
    </source>
</evidence>
<evidence type="ECO:0000255" key="2"/>
<evidence type="ECO:0000255" key="3">
    <source>
        <dbReference type="PROSITE-ProRule" id="PRU00060"/>
    </source>
</evidence>
<evidence type="ECO:0000255" key="4">
    <source>
        <dbReference type="PROSITE-ProRule" id="PRU00498"/>
    </source>
</evidence>
<evidence type="ECO:0000255" key="5">
    <source>
        <dbReference type="PROSITE-ProRule" id="PRU00703"/>
    </source>
</evidence>
<evidence type="ECO:0000255" key="6">
    <source>
        <dbReference type="PROSITE-ProRule" id="PRU01193"/>
    </source>
</evidence>
<evidence type="ECO:0000256" key="7">
    <source>
        <dbReference type="SAM" id="MobiDB-lite"/>
    </source>
</evidence>
<evidence type="ECO:0000269" key="8">
    <source>
    </source>
</evidence>
<evidence type="ECO:0000305" key="9"/>
<evidence type="ECO:0000312" key="10">
    <source>
        <dbReference type="FlyBase" id="FBgn0262124"/>
    </source>
</evidence>
<evidence type="ECO:0000312" key="11">
    <source>
        <dbReference type="Proteomes" id="UP000000803"/>
    </source>
</evidence>
<evidence type="ECO:0007829" key="12">
    <source>
        <dbReference type="PDB" id="8CT8"/>
    </source>
</evidence>
<reference evidence="11" key="1">
    <citation type="journal article" date="2000" name="Science">
        <title>The genome sequence of Drosophila melanogaster.</title>
        <authorList>
            <person name="Adams M.D."/>
            <person name="Celniker S.E."/>
            <person name="Holt R.A."/>
            <person name="Evans C.A."/>
            <person name="Gocayne J.D."/>
            <person name="Amanatides P.G."/>
            <person name="Scherer S.E."/>
            <person name="Li P.W."/>
            <person name="Hoskins R.A."/>
            <person name="Galle R.F."/>
            <person name="George R.A."/>
            <person name="Lewis S.E."/>
            <person name="Richards S."/>
            <person name="Ashburner M."/>
            <person name="Henderson S.N."/>
            <person name="Sutton G.G."/>
            <person name="Wortman J.R."/>
            <person name="Yandell M.D."/>
            <person name="Zhang Q."/>
            <person name="Chen L.X."/>
            <person name="Brandon R.C."/>
            <person name="Rogers Y.-H.C."/>
            <person name="Blazej R.G."/>
            <person name="Champe M."/>
            <person name="Pfeiffer B.D."/>
            <person name="Wan K.H."/>
            <person name="Doyle C."/>
            <person name="Baxter E.G."/>
            <person name="Helt G."/>
            <person name="Nelson C.R."/>
            <person name="Miklos G.L.G."/>
            <person name="Abril J.F."/>
            <person name="Agbayani A."/>
            <person name="An H.-J."/>
            <person name="Andrews-Pfannkoch C."/>
            <person name="Baldwin D."/>
            <person name="Ballew R.M."/>
            <person name="Basu A."/>
            <person name="Baxendale J."/>
            <person name="Bayraktaroglu L."/>
            <person name="Beasley E.M."/>
            <person name="Beeson K.Y."/>
            <person name="Benos P.V."/>
            <person name="Berman B.P."/>
            <person name="Bhandari D."/>
            <person name="Bolshakov S."/>
            <person name="Borkova D."/>
            <person name="Botchan M.R."/>
            <person name="Bouck J."/>
            <person name="Brokstein P."/>
            <person name="Brottier P."/>
            <person name="Burtis K.C."/>
            <person name="Busam D.A."/>
            <person name="Butler H."/>
            <person name="Cadieu E."/>
            <person name="Center A."/>
            <person name="Chandra I."/>
            <person name="Cherry J.M."/>
            <person name="Cawley S."/>
            <person name="Dahlke C."/>
            <person name="Davenport L.B."/>
            <person name="Davies P."/>
            <person name="de Pablos B."/>
            <person name="Delcher A."/>
            <person name="Deng Z."/>
            <person name="Mays A.D."/>
            <person name="Dew I."/>
            <person name="Dietz S.M."/>
            <person name="Dodson K."/>
            <person name="Doup L.E."/>
            <person name="Downes M."/>
            <person name="Dugan-Rocha S."/>
            <person name="Dunkov B.C."/>
            <person name="Dunn P."/>
            <person name="Durbin K.J."/>
            <person name="Evangelista C.C."/>
            <person name="Ferraz C."/>
            <person name="Ferriera S."/>
            <person name="Fleischmann W."/>
            <person name="Fosler C."/>
            <person name="Gabrielian A.E."/>
            <person name="Garg N.S."/>
            <person name="Gelbart W.M."/>
            <person name="Glasser K."/>
            <person name="Glodek A."/>
            <person name="Gong F."/>
            <person name="Gorrell J.H."/>
            <person name="Gu Z."/>
            <person name="Guan P."/>
            <person name="Harris M."/>
            <person name="Harris N.L."/>
            <person name="Harvey D.A."/>
            <person name="Heiman T.J."/>
            <person name="Hernandez J.R."/>
            <person name="Houck J."/>
            <person name="Hostin D."/>
            <person name="Houston K.A."/>
            <person name="Howland T.J."/>
            <person name="Wei M.-H."/>
            <person name="Ibegwam C."/>
            <person name="Jalali M."/>
            <person name="Kalush F."/>
            <person name="Karpen G.H."/>
            <person name="Ke Z."/>
            <person name="Kennison J.A."/>
            <person name="Ketchum K.A."/>
            <person name="Kimmel B.E."/>
            <person name="Kodira C.D."/>
            <person name="Kraft C.L."/>
            <person name="Kravitz S."/>
            <person name="Kulp D."/>
            <person name="Lai Z."/>
            <person name="Lasko P."/>
            <person name="Lei Y."/>
            <person name="Levitsky A.A."/>
            <person name="Li J.H."/>
            <person name="Li Z."/>
            <person name="Liang Y."/>
            <person name="Lin X."/>
            <person name="Liu X."/>
            <person name="Mattei B."/>
            <person name="McIntosh T.C."/>
            <person name="McLeod M.P."/>
            <person name="McPherson D."/>
            <person name="Merkulov G."/>
            <person name="Milshina N.V."/>
            <person name="Mobarry C."/>
            <person name="Morris J."/>
            <person name="Moshrefi A."/>
            <person name="Mount S.M."/>
            <person name="Moy M."/>
            <person name="Murphy B."/>
            <person name="Murphy L."/>
            <person name="Muzny D.M."/>
            <person name="Nelson D.L."/>
            <person name="Nelson D.R."/>
            <person name="Nelson K.A."/>
            <person name="Nixon K."/>
            <person name="Nusskern D.R."/>
            <person name="Pacleb J.M."/>
            <person name="Palazzolo M."/>
            <person name="Pittman G.S."/>
            <person name="Pan S."/>
            <person name="Pollard J."/>
            <person name="Puri V."/>
            <person name="Reese M.G."/>
            <person name="Reinert K."/>
            <person name="Remington K."/>
            <person name="Saunders R.D.C."/>
            <person name="Scheeler F."/>
            <person name="Shen H."/>
            <person name="Shue B.C."/>
            <person name="Siden-Kiamos I."/>
            <person name="Simpson M."/>
            <person name="Skupski M.P."/>
            <person name="Smith T.J."/>
            <person name="Spier E."/>
            <person name="Spradling A.C."/>
            <person name="Stapleton M."/>
            <person name="Strong R."/>
            <person name="Sun E."/>
            <person name="Svirskas R."/>
            <person name="Tector C."/>
            <person name="Turner R."/>
            <person name="Venter E."/>
            <person name="Wang A.H."/>
            <person name="Wang X."/>
            <person name="Wang Z.-Y."/>
            <person name="Wassarman D.A."/>
            <person name="Weinstock G.M."/>
            <person name="Weissenbach J."/>
            <person name="Williams S.M."/>
            <person name="Woodage T."/>
            <person name="Worley K.C."/>
            <person name="Wu D."/>
            <person name="Yang S."/>
            <person name="Yao Q.A."/>
            <person name="Ye J."/>
            <person name="Yeh R.-F."/>
            <person name="Zaveri J.S."/>
            <person name="Zhan M."/>
            <person name="Zhang G."/>
            <person name="Zhao Q."/>
            <person name="Zheng L."/>
            <person name="Zheng X.H."/>
            <person name="Zhong F.N."/>
            <person name="Zhong W."/>
            <person name="Zhou X."/>
            <person name="Zhu S.C."/>
            <person name="Zhu X."/>
            <person name="Smith H.O."/>
            <person name="Gibbs R.A."/>
            <person name="Myers E.W."/>
            <person name="Rubin G.M."/>
            <person name="Venter J.C."/>
        </authorList>
    </citation>
    <scope>NUCLEOTIDE SEQUENCE [LARGE SCALE GENOMIC DNA]</scope>
    <source>
        <strain evidence="11">Berkeley</strain>
    </source>
</reference>
<reference evidence="11" key="2">
    <citation type="journal article" date="2002" name="Genome Biol.">
        <title>Annotation of the Drosophila melanogaster euchromatic genome: a systematic review.</title>
        <authorList>
            <person name="Misra S."/>
            <person name="Crosby M.A."/>
            <person name="Mungall C.J."/>
            <person name="Matthews B.B."/>
            <person name="Campbell K.S."/>
            <person name="Hradecky P."/>
            <person name="Huang Y."/>
            <person name="Kaminker J.S."/>
            <person name="Millburn G.H."/>
            <person name="Prochnik S.E."/>
            <person name="Smith C.D."/>
            <person name="Tupy J.L."/>
            <person name="Whitfield E.J."/>
            <person name="Bayraktaroglu L."/>
            <person name="Berman B.P."/>
            <person name="Bettencourt B.R."/>
            <person name="Celniker S.E."/>
            <person name="de Grey A.D.N.J."/>
            <person name="Drysdale R.A."/>
            <person name="Harris N.L."/>
            <person name="Richter J."/>
            <person name="Russo S."/>
            <person name="Schroeder A.J."/>
            <person name="Shu S.Q."/>
            <person name="Stapleton M."/>
            <person name="Yamada C."/>
            <person name="Ashburner M."/>
            <person name="Gelbart W.M."/>
            <person name="Rubin G.M."/>
            <person name="Lewis S.E."/>
        </authorList>
    </citation>
    <scope>GENOME REANNOTATION</scope>
    <source>
        <strain evidence="11">Berkeley</strain>
    </source>
</reference>
<reference evidence="9" key="3">
    <citation type="journal article" date="2019" name="IScience">
        <title>A Novel Neuroprotective Role of Phosphatase of Regenerating Liver-1 against CO2 Stimulation in Drosophila.</title>
        <authorList>
            <person name="Guo P."/>
            <person name="Xu X."/>
            <person name="Wang F."/>
            <person name="Yuan X."/>
            <person name="Tu Y."/>
            <person name="Zhang B."/>
            <person name="Zheng H."/>
            <person name="Yu D."/>
            <person name="Ge W."/>
            <person name="Gong Z."/>
            <person name="Yang X."/>
            <person name="Xi Y."/>
        </authorList>
    </citation>
    <scope>FUNCTION</scope>
    <scope>INTERACTION WITH PRL-1</scope>
    <scope>SUBCELLULAR LOCATION</scope>
    <scope>DISRUPTION PHENOTYPE</scope>
</reference>
<organism evidence="11">
    <name type="scientific">Drosophila melanogaster</name>
    <name type="common">Fruit fly</name>
    <dbReference type="NCBI Taxonomy" id="7227"/>
    <lineage>
        <taxon>Eukaryota</taxon>
        <taxon>Metazoa</taxon>
        <taxon>Ecdysozoa</taxon>
        <taxon>Arthropoda</taxon>
        <taxon>Hexapoda</taxon>
        <taxon>Insecta</taxon>
        <taxon>Pterygota</taxon>
        <taxon>Neoptera</taxon>
        <taxon>Endopterygota</taxon>
        <taxon>Diptera</taxon>
        <taxon>Brachycera</taxon>
        <taxon>Muscomorpha</taxon>
        <taxon>Ephydroidea</taxon>
        <taxon>Drosophilidae</taxon>
        <taxon>Drosophila</taxon>
        <taxon>Sophophora</taxon>
    </lineage>
</organism>
<proteinExistence type="evidence at protein level"/>
<sequence>MNTYFISFITIIIFANGINGTSVDTSNKLLLQKANDFNLSQNLSSSRTRRTIANSFRIVGIRLEDETVETKNGIPTVLVDKEQQFRVFGSGLEENTAITFTNEKNDYGGPCLKPATDLFTPIEVSSNGFSALYSVKFPSFINEFFICAKTAEKTTNHSKAATTTPLEHQGNSDFLKIKTFEPLIPVWLAIIIIVTCLGFSALFSGLNLGLMSMDRTELKILRNTGTEKEKKYASKIAPVRDQGNYLLCSILLGNVLVNSTFTILLDGLTSGLFAVIFSTLAIVLFGEITPQAVCSRHGLAIGAKTILVTKTVMAITAPLSYPVSRILDKLLGEEIGNVYNRERLKELVRVTNDVNDLDKNEVNIISGALELRKKTVADVMTHINDAFMLSLDALLDFETVSEIMNSGYSRIPVYDGDRKNIVTLLYIKDLAFVDTDDNTPLKTLCEFYQNPVHFVFEDYTLDIMFNQFKEGTIGHIAFVHRVNNEGDGDPFYETVGLVTLEDVIEELIQAEIVDETDVFVDNRTKTRRNRYKKADFSAFAERREVQTVRISPQLTLATFQYLSTAVDAFKKDVISELILRRLLNQDVFHNIKTKGKSKDDPSLYIFTQGKAVDFFVLILEGRVEVTIGKEALMFESGPFTYFGTQALVPNVVIDSPTQMGSLQSLNMDSKIRQSFVPDYSVRAISDVIYITIKRVLYLTAKKATLLEKSRKSGTFSSETFDDEVERLLHSITENEKPSCFAQNQSTRRLSNRSINSSPTNMNRSPDFVYNSVDEAIQDDTKLKNIKHADNVTTSISLVAAELEDLHSGEQDTTAASMPLLPKLDDKFESKQSKP</sequence>
<dbReference type="EMBL" id="AE013599">
    <property type="protein sequence ID" value="AIG63332.1"/>
    <property type="molecule type" value="Genomic_DNA"/>
</dbReference>
<dbReference type="EMBL" id="AE013599">
    <property type="protein sequence ID" value="EDP28148.2"/>
    <property type="molecule type" value="Genomic_DNA"/>
</dbReference>
<dbReference type="EMBL" id="AE013599">
    <property type="protein sequence ID" value="EDP28149.2"/>
    <property type="molecule type" value="Genomic_DNA"/>
</dbReference>
<dbReference type="EMBL" id="AE013599">
    <property type="protein sequence ID" value="ELP57407.1"/>
    <property type="molecule type" value="Genomic_DNA"/>
</dbReference>
<dbReference type="RefSeq" id="NP_001104390.2">
    <property type="nucleotide sequence ID" value="NM_001110920.4"/>
</dbReference>
<dbReference type="RefSeq" id="NP_001104391.2">
    <property type="nucleotide sequence ID" value="NM_001110921.4"/>
</dbReference>
<dbReference type="RefSeq" id="NP_001263162.1">
    <property type="nucleotide sequence ID" value="NM_001276233.2"/>
</dbReference>
<dbReference type="RefSeq" id="NP_001288144.1">
    <property type="nucleotide sequence ID" value="NM_001301215.1"/>
</dbReference>
<dbReference type="PDB" id="8CT8">
    <property type="method" value="X-ray"/>
    <property type="resolution" value="2.50 A"/>
    <property type="chains" value="A/B=362-515"/>
</dbReference>
<dbReference type="PDBsum" id="8CT8"/>
<dbReference type="SMR" id="A0A0B7P9G0"/>
<dbReference type="FunCoup" id="A0A0B7P9G0">
    <property type="interactions" value="62"/>
</dbReference>
<dbReference type="IntAct" id="A0A0B7P9G0">
    <property type="interactions" value="7"/>
</dbReference>
<dbReference type="STRING" id="7227.FBpp0291436"/>
<dbReference type="GlyCosmos" id="A0A0B7P9G0">
    <property type="glycosylation" value="7 sites, No reported glycans"/>
</dbReference>
<dbReference type="GlyGen" id="A0A0B7P9G0">
    <property type="glycosylation" value="7 sites"/>
</dbReference>
<dbReference type="PaxDb" id="7227-FBpp0291436"/>
<dbReference type="EnsemblMetazoa" id="FBtr0302226">
    <property type="protein sequence ID" value="FBpp0291436"/>
    <property type="gene ID" value="FBgn0262124"/>
</dbReference>
<dbReference type="EnsemblMetazoa" id="FBtr0302227">
    <property type="protein sequence ID" value="FBpp0291437"/>
    <property type="gene ID" value="FBgn0262124"/>
</dbReference>
<dbReference type="EnsemblMetazoa" id="FBtr0334938">
    <property type="protein sequence ID" value="FBpp0306957"/>
    <property type="gene ID" value="FBgn0262124"/>
</dbReference>
<dbReference type="EnsemblMetazoa" id="FBtr0346683">
    <property type="protein sequence ID" value="FBpp0312292"/>
    <property type="gene ID" value="FBgn0262124"/>
</dbReference>
<dbReference type="GeneID" id="5740320"/>
<dbReference type="KEGG" id="dme:Dmel_CG42595"/>
<dbReference type="AGR" id="FB:FBgn0262124"/>
<dbReference type="CTD" id="5740320"/>
<dbReference type="FlyBase" id="FBgn0262124">
    <property type="gene designation" value="uex"/>
</dbReference>
<dbReference type="VEuPathDB" id="VectorBase:FBgn0262124"/>
<dbReference type="eggNOG" id="KOG2118">
    <property type="taxonomic scope" value="Eukaryota"/>
</dbReference>
<dbReference type="GeneTree" id="ENSGT00940000169533"/>
<dbReference type="InParanoid" id="A0A0B7P9G0"/>
<dbReference type="OMA" id="QDFTVFA"/>
<dbReference type="OrthoDB" id="5353557at2759"/>
<dbReference type="PhylomeDB" id="A0A0B7P9G0"/>
<dbReference type="BioGRID-ORCS" id="5740320">
    <property type="hits" value="0 hits in 3 CRISPR screens"/>
</dbReference>
<dbReference type="ChiTaRS" id="uex">
    <property type="organism name" value="fly"/>
</dbReference>
<dbReference type="GenomeRNAi" id="5740320"/>
<dbReference type="PRO" id="PR:A0A0B7P9G0"/>
<dbReference type="Proteomes" id="UP000000803">
    <property type="component" value="Chromosome 2R"/>
</dbReference>
<dbReference type="Bgee" id="FBgn0262124">
    <property type="expression patterns" value="Expressed in spermatocyte cyst cell (Drosophila) in testis and 272 other cell types or tissues"/>
</dbReference>
<dbReference type="ExpressionAtlas" id="A0A0B7P9G0">
    <property type="expression patterns" value="baseline and differential"/>
</dbReference>
<dbReference type="GO" id="GO:0005886">
    <property type="term" value="C:plasma membrane"/>
    <property type="evidence" value="ECO:0000314"/>
    <property type="project" value="UniProtKB"/>
</dbReference>
<dbReference type="GO" id="GO:0015095">
    <property type="term" value="F:magnesium ion transmembrane transporter activity"/>
    <property type="evidence" value="ECO:0000314"/>
    <property type="project" value="FlyBase"/>
</dbReference>
<dbReference type="GO" id="GO:0022857">
    <property type="term" value="F:transmembrane transporter activity"/>
    <property type="evidence" value="ECO:0000318"/>
    <property type="project" value="GO_Central"/>
</dbReference>
<dbReference type="GO" id="GO:0071244">
    <property type="term" value="P:cellular response to carbon dioxide"/>
    <property type="evidence" value="ECO:0000316"/>
    <property type="project" value="UniProtKB"/>
</dbReference>
<dbReference type="GO" id="GO:0140115">
    <property type="term" value="P:export across plasma membrane"/>
    <property type="evidence" value="ECO:0000314"/>
    <property type="project" value="FlyBase"/>
</dbReference>
<dbReference type="GO" id="GO:0006873">
    <property type="term" value="P:intracellular monoatomic ion homeostasis"/>
    <property type="evidence" value="ECO:0000250"/>
    <property type="project" value="FlyBase"/>
</dbReference>
<dbReference type="GO" id="GO:0007616">
    <property type="term" value="P:long-term memory"/>
    <property type="evidence" value="ECO:0000315"/>
    <property type="project" value="FlyBase"/>
</dbReference>
<dbReference type="GO" id="GO:0010960">
    <property type="term" value="P:magnesium ion homeostasis"/>
    <property type="evidence" value="ECO:0000318"/>
    <property type="project" value="GO_Central"/>
</dbReference>
<dbReference type="GO" id="GO:1903830">
    <property type="term" value="P:magnesium ion transmembrane transport"/>
    <property type="evidence" value="ECO:0000314"/>
    <property type="project" value="FlyBase"/>
</dbReference>
<dbReference type="CDD" id="cd04590">
    <property type="entry name" value="CBS_pair_CorC_HlyC_assoc"/>
    <property type="match status" value="1"/>
</dbReference>
<dbReference type="FunFam" id="3.10.580.10:FF:000001">
    <property type="entry name" value="Putative metal transporter CNNM3 isoform 2"/>
    <property type="match status" value="1"/>
</dbReference>
<dbReference type="FunFam" id="2.60.120.10:FF:000242">
    <property type="entry name" value="Uncharacterized protein, isoform A"/>
    <property type="match status" value="1"/>
</dbReference>
<dbReference type="Gene3D" id="3.10.580.10">
    <property type="entry name" value="CBS-domain"/>
    <property type="match status" value="1"/>
</dbReference>
<dbReference type="Gene3D" id="2.60.120.10">
    <property type="entry name" value="Jelly Rolls"/>
    <property type="match status" value="1"/>
</dbReference>
<dbReference type="InterPro" id="IPR045095">
    <property type="entry name" value="ACDP"/>
</dbReference>
<dbReference type="InterPro" id="IPR000644">
    <property type="entry name" value="CBS_dom"/>
</dbReference>
<dbReference type="InterPro" id="IPR046342">
    <property type="entry name" value="CBS_dom_sf"/>
</dbReference>
<dbReference type="InterPro" id="IPR000595">
    <property type="entry name" value="cNMP-bd_dom"/>
</dbReference>
<dbReference type="InterPro" id="IPR018490">
    <property type="entry name" value="cNMP-bd_dom_sf"/>
</dbReference>
<dbReference type="InterPro" id="IPR002550">
    <property type="entry name" value="CNNM"/>
</dbReference>
<dbReference type="InterPro" id="IPR044751">
    <property type="entry name" value="Ion_transp-like_CBS"/>
</dbReference>
<dbReference type="InterPro" id="IPR014710">
    <property type="entry name" value="RmlC-like_jellyroll"/>
</dbReference>
<dbReference type="PANTHER" id="PTHR12064">
    <property type="entry name" value="METAL TRANSPORTER CNNM"/>
    <property type="match status" value="1"/>
</dbReference>
<dbReference type="PANTHER" id="PTHR12064:SF94">
    <property type="entry name" value="UNEXTENDED PROTEIN"/>
    <property type="match status" value="1"/>
</dbReference>
<dbReference type="Pfam" id="PF01595">
    <property type="entry name" value="CNNM"/>
    <property type="match status" value="1"/>
</dbReference>
<dbReference type="SUPFAM" id="SSF51206">
    <property type="entry name" value="cAMP-binding domain-like"/>
    <property type="match status" value="1"/>
</dbReference>
<dbReference type="SUPFAM" id="SSF54631">
    <property type="entry name" value="CBS-domain pair"/>
    <property type="match status" value="1"/>
</dbReference>
<dbReference type="PROSITE" id="PS51371">
    <property type="entry name" value="CBS"/>
    <property type="match status" value="2"/>
</dbReference>
<dbReference type="PROSITE" id="PS50042">
    <property type="entry name" value="CNMP_BINDING_3"/>
    <property type="match status" value="1"/>
</dbReference>
<dbReference type="PROSITE" id="PS51846">
    <property type="entry name" value="CNNM"/>
    <property type="match status" value="1"/>
</dbReference>
<comment type="function">
    <text evidence="1 8">Probable metal transporter (By similarity). Acts downstream of PRL-1 and protects the nervous system against olfactory carbon dioxide stimulation (PubMed:31404830).</text>
</comment>
<comment type="subunit">
    <text evidence="8">Interacts with PRL-1, possibly at the plasma membrane.</text>
</comment>
<comment type="interaction">
    <interactant intactId="EBI-44452356">
        <id>A0A0B7P9G0</id>
    </interactant>
    <interactant intactId="EBI-148091">
        <id>O61722</id>
        <label>PRL-1</label>
    </interactant>
    <organismsDiffer>false</organismsDiffer>
    <experiments>4</experiments>
</comment>
<comment type="subcellular location">
    <subcellularLocation>
        <location evidence="8">Cell membrane</location>
        <topology evidence="2">Multi-pass membrane protein</topology>
    </subcellularLocation>
</comment>
<comment type="disruption phenotype">
    <text evidence="8">RNAi-mediated knockdown in the nervous system results in a held-up wing phenotype after eclosion and upon carbon dioxide stimulation.</text>
</comment>
<comment type="similarity">
    <text evidence="9">Belongs to the ACDP family.</text>
</comment>
<keyword id="KW-0002">3D-structure</keyword>
<keyword id="KW-0129">CBS domain</keyword>
<keyword id="KW-1003">Cell membrane</keyword>
<keyword id="KW-0325">Glycoprotein</keyword>
<keyword id="KW-0406">Ion transport</keyword>
<keyword id="KW-0472">Membrane</keyword>
<keyword id="KW-1185">Reference proteome</keyword>
<keyword id="KW-0677">Repeat</keyword>
<keyword id="KW-0732">Signal</keyword>
<keyword id="KW-0812">Transmembrane</keyword>
<keyword id="KW-1133">Transmembrane helix</keyword>
<keyword id="KW-0813">Transport</keyword>
<feature type="signal peptide" evidence="2">
    <location>
        <begin position="1"/>
        <end position="20"/>
    </location>
</feature>
<feature type="chain" id="PRO_5015035038" description="Unextended protein" evidence="2">
    <location>
        <begin position="21"/>
        <end position="834"/>
    </location>
</feature>
<feature type="topological domain" description="Extracellular" evidence="9">
    <location>
        <begin position="21"/>
        <end position="182"/>
    </location>
</feature>
<feature type="transmembrane region" description="Helical" evidence="2">
    <location>
        <begin position="183"/>
        <end position="203"/>
    </location>
</feature>
<feature type="topological domain" description="Cytoplasmic" evidence="9">
    <location>
        <begin position="204"/>
        <end position="244"/>
    </location>
</feature>
<feature type="transmembrane region" description="Helical" evidence="2">
    <location>
        <begin position="245"/>
        <end position="265"/>
    </location>
</feature>
<feature type="topological domain" description="Extracellular" evidence="9">
    <location>
        <begin position="266"/>
        <end position="267"/>
    </location>
</feature>
<feature type="transmembrane region" description="Helical" evidence="2">
    <location>
        <begin position="268"/>
        <end position="288"/>
    </location>
</feature>
<feature type="topological domain" description="Cytoplasmic" evidence="9">
    <location>
        <begin position="289"/>
        <end position="298"/>
    </location>
</feature>
<feature type="transmembrane region" description="Helical" evidence="2">
    <location>
        <begin position="299"/>
        <end position="319"/>
    </location>
</feature>
<feature type="topological domain" description="Extracellular" evidence="9">
    <location>
        <begin position="320"/>
        <end position="834"/>
    </location>
</feature>
<feature type="domain" description="CNNM transmembrane" evidence="6">
    <location>
        <begin position="182"/>
        <end position="361"/>
    </location>
</feature>
<feature type="domain" description="CBS 1" evidence="5">
    <location>
        <begin position="380"/>
        <end position="441"/>
    </location>
</feature>
<feature type="domain" description="CBS 2" evidence="5">
    <location>
        <begin position="448"/>
        <end position="515"/>
    </location>
</feature>
<feature type="region of interest" description="Disordered" evidence="7">
    <location>
        <begin position="739"/>
        <end position="765"/>
    </location>
</feature>
<feature type="region of interest" description="Disordered" evidence="7">
    <location>
        <begin position="807"/>
        <end position="834"/>
    </location>
</feature>
<feature type="compositionally biased region" description="Polar residues" evidence="7">
    <location>
        <begin position="740"/>
        <end position="763"/>
    </location>
</feature>
<feature type="compositionally biased region" description="Basic and acidic residues" evidence="7">
    <location>
        <begin position="822"/>
        <end position="834"/>
    </location>
</feature>
<feature type="binding site" evidence="3">
    <location>
        <begin position="604"/>
        <end position="656"/>
    </location>
    <ligand>
        <name>a nucleoside 3',5'-cyclic phosphate</name>
        <dbReference type="ChEBI" id="CHEBI:58464"/>
    </ligand>
</feature>
<feature type="glycosylation site" description="N-linked (GlcNAc...) asparagine" evidence="4">
    <location>
        <position position="38"/>
    </location>
</feature>
<feature type="glycosylation site" description="N-linked (GlcNAc...) asparagine" evidence="4">
    <location>
        <position position="42"/>
    </location>
</feature>
<feature type="glycosylation site" description="N-linked (GlcNAc...) asparagine" evidence="4">
    <location>
        <position position="156"/>
    </location>
</feature>
<feature type="glycosylation site" description="N-linked (GlcNAc...) asparagine" evidence="4">
    <location>
        <position position="522"/>
    </location>
</feature>
<feature type="glycosylation site" description="N-linked (GlcNAc...) asparagine" evidence="4">
    <location>
        <position position="743"/>
    </location>
</feature>
<feature type="glycosylation site" description="N-linked (GlcNAc...) asparagine" evidence="4">
    <location>
        <position position="751"/>
    </location>
</feature>
<feature type="glycosylation site" description="N-linked (GlcNAc...) asparagine" evidence="4">
    <location>
        <position position="790"/>
    </location>
</feature>
<feature type="helix" evidence="12">
    <location>
        <begin position="364"/>
        <end position="370"/>
    </location>
</feature>
<feature type="helix" evidence="12">
    <location>
        <begin position="371"/>
        <end position="373"/>
    </location>
</feature>
<feature type="helix" evidence="12">
    <location>
        <begin position="376"/>
        <end position="378"/>
    </location>
</feature>
<feature type="turn" evidence="12">
    <location>
        <begin position="383"/>
        <end position="385"/>
    </location>
</feature>
<feature type="helix" evidence="12">
    <location>
        <begin position="397"/>
        <end position="404"/>
    </location>
</feature>
<feature type="strand" evidence="12">
    <location>
        <begin position="409"/>
        <end position="417"/>
    </location>
</feature>
<feature type="strand" evidence="12">
    <location>
        <begin position="421"/>
        <end position="426"/>
    </location>
</feature>
<feature type="helix" evidence="12">
    <location>
        <begin position="427"/>
        <end position="430"/>
    </location>
</feature>
<feature type="turn" evidence="12">
    <location>
        <begin position="435"/>
        <end position="437"/>
    </location>
</feature>
<feature type="helix" evidence="12">
    <location>
        <begin position="441"/>
        <end position="448"/>
    </location>
</feature>
<feature type="helix" evidence="12">
    <location>
        <begin position="461"/>
        <end position="470"/>
    </location>
</feature>
<feature type="strand" evidence="12">
    <location>
        <begin position="475"/>
        <end position="483"/>
    </location>
</feature>
<feature type="strand" evidence="12">
    <location>
        <begin position="486"/>
        <end position="489"/>
    </location>
</feature>
<feature type="strand" evidence="12">
    <location>
        <begin position="491"/>
        <end position="499"/>
    </location>
</feature>
<feature type="helix" evidence="12">
    <location>
        <begin position="500"/>
        <end position="508"/>
    </location>
</feature>
<protein>
    <recommendedName>
        <fullName evidence="10">Unextended protein</fullName>
    </recommendedName>
    <alternativeName>
        <fullName evidence="9">Putative metal transporter uex</fullName>
    </alternativeName>
</protein>